<accession>Q9A545</accession>
<organism>
    <name type="scientific">Caulobacter vibrioides (strain ATCC 19089 / CIP 103742 / CB 15)</name>
    <name type="common">Caulobacter crescentus</name>
    <dbReference type="NCBI Taxonomy" id="190650"/>
    <lineage>
        <taxon>Bacteria</taxon>
        <taxon>Pseudomonadati</taxon>
        <taxon>Pseudomonadota</taxon>
        <taxon>Alphaproteobacteria</taxon>
        <taxon>Caulobacterales</taxon>
        <taxon>Caulobacteraceae</taxon>
        <taxon>Caulobacter</taxon>
    </lineage>
</organism>
<name>HIUH_CAUVC</name>
<gene>
    <name type="ordered locus">CC_2620</name>
</gene>
<proteinExistence type="inferred from homology"/>
<dbReference type="EC" id="3.5.2.17"/>
<dbReference type="EMBL" id="AE005673">
    <property type="protein sequence ID" value="AAK24588.1"/>
    <property type="molecule type" value="Genomic_DNA"/>
</dbReference>
<dbReference type="PIR" id="H87573">
    <property type="entry name" value="H87573"/>
</dbReference>
<dbReference type="RefSeq" id="NP_421420.1">
    <property type="nucleotide sequence ID" value="NC_002696.2"/>
</dbReference>
<dbReference type="RefSeq" id="WP_010920473.1">
    <property type="nucleotide sequence ID" value="NC_002696.2"/>
</dbReference>
<dbReference type="SMR" id="Q9A545"/>
<dbReference type="STRING" id="190650.CC_2620"/>
<dbReference type="EnsemblBacteria" id="AAK24588">
    <property type="protein sequence ID" value="AAK24588"/>
    <property type="gene ID" value="CC_2620"/>
</dbReference>
<dbReference type="KEGG" id="ccr:CC_2620"/>
<dbReference type="PATRIC" id="fig|190650.5.peg.2634"/>
<dbReference type="eggNOG" id="COG2351">
    <property type="taxonomic scope" value="Bacteria"/>
</dbReference>
<dbReference type="HOGENOM" id="CLU_115536_1_1_5"/>
<dbReference type="BioCyc" id="CAULO:CC2620-MONOMER"/>
<dbReference type="Proteomes" id="UP000001816">
    <property type="component" value="Chromosome"/>
</dbReference>
<dbReference type="GO" id="GO:0033971">
    <property type="term" value="F:hydroxyisourate hydrolase activity"/>
    <property type="evidence" value="ECO:0007669"/>
    <property type="project" value="UniProtKB-EC"/>
</dbReference>
<dbReference type="GO" id="GO:0006144">
    <property type="term" value="P:purine nucleobase metabolic process"/>
    <property type="evidence" value="ECO:0007669"/>
    <property type="project" value="UniProtKB-KW"/>
</dbReference>
<dbReference type="CDD" id="cd05822">
    <property type="entry name" value="TLP_HIUase"/>
    <property type="match status" value="1"/>
</dbReference>
<dbReference type="Gene3D" id="2.60.40.180">
    <property type="entry name" value="Transthyretin/hydroxyisourate hydrolase domain"/>
    <property type="match status" value="1"/>
</dbReference>
<dbReference type="InterPro" id="IPR014306">
    <property type="entry name" value="Hydroxyisourate_hydrolase"/>
</dbReference>
<dbReference type="InterPro" id="IPR023418">
    <property type="entry name" value="Thyroxine_BS"/>
</dbReference>
<dbReference type="InterPro" id="IPR000895">
    <property type="entry name" value="Transthyretin/HIU_hydrolase"/>
</dbReference>
<dbReference type="InterPro" id="IPR023416">
    <property type="entry name" value="Transthyretin/HIU_hydrolase_d"/>
</dbReference>
<dbReference type="InterPro" id="IPR036817">
    <property type="entry name" value="Transthyretin/HIU_hydrolase_sf"/>
</dbReference>
<dbReference type="InterPro" id="IPR023419">
    <property type="entry name" value="Transthyretin_CS"/>
</dbReference>
<dbReference type="NCBIfam" id="TIGR02962">
    <property type="entry name" value="hdxy_isourate"/>
    <property type="match status" value="1"/>
</dbReference>
<dbReference type="PANTHER" id="PTHR10395:SF7">
    <property type="entry name" value="5-HYDROXYISOURATE HYDROLASE"/>
    <property type="match status" value="1"/>
</dbReference>
<dbReference type="PANTHER" id="PTHR10395">
    <property type="entry name" value="URICASE AND TRANSTHYRETIN-RELATED"/>
    <property type="match status" value="1"/>
</dbReference>
<dbReference type="Pfam" id="PF00576">
    <property type="entry name" value="Transthyretin"/>
    <property type="match status" value="1"/>
</dbReference>
<dbReference type="PRINTS" id="PR00189">
    <property type="entry name" value="TRNSTHYRETIN"/>
</dbReference>
<dbReference type="SUPFAM" id="SSF49472">
    <property type="entry name" value="Transthyretin (synonym: prealbumin)"/>
    <property type="match status" value="1"/>
</dbReference>
<dbReference type="PROSITE" id="PS00768">
    <property type="entry name" value="TRANSTHYRETIN_1"/>
    <property type="match status" value="1"/>
</dbReference>
<dbReference type="PROSITE" id="PS00769">
    <property type="entry name" value="TRANSTHYRETIN_2"/>
    <property type="match status" value="1"/>
</dbReference>
<comment type="function">
    <text evidence="1">Catalyzes the hydrolysis of 5-hydroxyisourate (HIU) to 2-oxo-4-hydroxy-4-carboxy-5-ureidoimidazoline (OHCU).</text>
</comment>
<comment type="catalytic activity">
    <reaction>
        <text>5-hydroxyisourate + H2O = 5-hydroxy-2-oxo-4-ureido-2,5-dihydro-1H-imidazole-5-carboxylate + H(+)</text>
        <dbReference type="Rhea" id="RHEA:23736"/>
        <dbReference type="ChEBI" id="CHEBI:15377"/>
        <dbReference type="ChEBI" id="CHEBI:15378"/>
        <dbReference type="ChEBI" id="CHEBI:18072"/>
        <dbReference type="ChEBI" id="CHEBI:58639"/>
        <dbReference type="EC" id="3.5.2.17"/>
    </reaction>
</comment>
<comment type="subunit">
    <text evidence="1">Homotetramer.</text>
</comment>
<comment type="miscellaneous">
    <text>HIU hydrolysis also occurs spontaneously, but more slowly.</text>
</comment>
<comment type="similarity">
    <text evidence="3">Belongs to the transthyretin family. 5-hydroxyisourate hydrolase subfamily.</text>
</comment>
<evidence type="ECO:0000250" key="1"/>
<evidence type="ECO:0000256" key="2">
    <source>
        <dbReference type="SAM" id="MobiDB-lite"/>
    </source>
</evidence>
<evidence type="ECO:0000305" key="3"/>
<reference key="1">
    <citation type="journal article" date="2001" name="Proc. Natl. Acad. Sci. U.S.A.">
        <title>Complete genome sequence of Caulobacter crescentus.</title>
        <authorList>
            <person name="Nierman W.C."/>
            <person name="Feldblyum T.V."/>
            <person name="Laub M.T."/>
            <person name="Paulsen I.T."/>
            <person name="Nelson K.E."/>
            <person name="Eisen J.A."/>
            <person name="Heidelberg J.F."/>
            <person name="Alley M.R.K."/>
            <person name="Ohta N."/>
            <person name="Maddock J.R."/>
            <person name="Potocka I."/>
            <person name="Nelson W.C."/>
            <person name="Newton A."/>
            <person name="Stephens C."/>
            <person name="Phadke N.D."/>
            <person name="Ely B."/>
            <person name="DeBoy R.T."/>
            <person name="Dodson R.J."/>
            <person name="Durkin A.S."/>
            <person name="Gwinn M.L."/>
            <person name="Haft D.H."/>
            <person name="Kolonay J.F."/>
            <person name="Smit J."/>
            <person name="Craven M.B."/>
            <person name="Khouri H.M."/>
            <person name="Shetty J."/>
            <person name="Berry K.J."/>
            <person name="Utterback T.R."/>
            <person name="Tran K."/>
            <person name="Wolf A.M."/>
            <person name="Vamathevan J.J."/>
            <person name="Ermolaeva M.D."/>
            <person name="White O."/>
            <person name="Salzberg S.L."/>
            <person name="Venter J.C."/>
            <person name="Shapiro L."/>
            <person name="Fraser C.M."/>
        </authorList>
    </citation>
    <scope>NUCLEOTIDE SEQUENCE [LARGE SCALE GENOMIC DNA]</scope>
    <source>
        <strain>ATCC 19089 / CIP 103742 / CB 15</strain>
    </source>
</reference>
<sequence>MSGLTTHILDQASGKPAAGVGVRVSRRDGEQTQWLAELRTDADGRARLVAGEDLAVGGYRLEFAIGDHFKASGLPVSDPPFLDVVVIDFAVSNLDQHWHVPLLVSPYGYSTYRGS</sequence>
<keyword id="KW-0378">Hydrolase</keyword>
<keyword id="KW-0659">Purine metabolism</keyword>
<keyword id="KW-1185">Reference proteome</keyword>
<feature type="chain" id="PRO_0000050611" description="5-hydroxyisourate hydrolase">
    <location>
        <begin position="1"/>
        <end position="115"/>
    </location>
</feature>
<feature type="region of interest" description="Disordered" evidence="2">
    <location>
        <begin position="1"/>
        <end position="23"/>
    </location>
</feature>
<feature type="binding site" evidence="1">
    <location>
        <position position="7"/>
    </location>
    <ligand>
        <name>substrate</name>
    </ligand>
</feature>
<feature type="binding site" evidence="1">
    <location>
        <position position="45"/>
    </location>
    <ligand>
        <name>substrate</name>
    </ligand>
</feature>
<feature type="binding site" evidence="1">
    <location>
        <position position="112"/>
    </location>
    <ligand>
        <name>substrate</name>
    </ligand>
</feature>
<protein>
    <recommendedName>
        <fullName>5-hydroxyisourate hydrolase</fullName>
        <shortName>HIU hydrolase</shortName>
        <shortName>HIUHase</shortName>
        <ecNumber>3.5.2.17</ecNumber>
    </recommendedName>
</protein>